<organism>
    <name type="scientific">Ovis aries</name>
    <name type="common">Sheep</name>
    <dbReference type="NCBI Taxonomy" id="9940"/>
    <lineage>
        <taxon>Eukaryota</taxon>
        <taxon>Metazoa</taxon>
        <taxon>Chordata</taxon>
        <taxon>Craniata</taxon>
        <taxon>Vertebrata</taxon>
        <taxon>Euteleostomi</taxon>
        <taxon>Mammalia</taxon>
        <taxon>Eutheria</taxon>
        <taxon>Laurasiatheria</taxon>
        <taxon>Artiodactyla</taxon>
        <taxon>Ruminantia</taxon>
        <taxon>Pecora</taxon>
        <taxon>Bovidae</taxon>
        <taxon>Caprinae</taxon>
        <taxon>Ovis</taxon>
    </lineage>
</organism>
<protein>
    <recommendedName>
        <fullName evidence="2">Insulin-like growth factor 1</fullName>
    </recommendedName>
    <alternativeName>
        <fullName evidence="5">Insulin-like growth factor I</fullName>
        <shortName evidence="5">IGF-I</shortName>
    </alternativeName>
    <alternativeName>
        <fullName>Somatomedin</fullName>
    </alternativeName>
</protein>
<comment type="function">
    <text evidence="1 2 3">The insulin-like growth factors, isolated from plasma, are structurally and functionally related to insulin but have a much higher growth-promoting activity. May be a physiological regulator of [1-14C]-2-deoxy-D-glucose (2DG) transport and glycogen synthesis in osteoblasts. Stimulates glucose transport in bone-derived osteoblastic (PyMS) cells and is effective at much lower concentrations than insulin, not only regarding glycogen and DNA synthesis but also with regard to enhancing glucose uptake. May play a role in synapse maturation. Ca(2+)-dependent exocytosis of IGF1 is required for sensory perception of smell in the olfactory bulb. Acts as a ligand for IGF1R. Binds to the alpha subunit of IGF1R, leading to the activation of the intrinsic tyrosine kinase activity which autophosphorylates tyrosine residues in the beta subunit thus initiating a cascade of down-stream signaling events leading to activation of the PI3K-AKT/PKB and the Ras-MAPK pathways. Binds to integrins ITGAV:ITGB3 and ITGA6:ITGB4. Its binding to integrins and subsequent ternary complex formation with integrins and IGFR1 are essential for IGF1 signaling. Induces the phosphorylation and activation of IGFR1, MAPK3/ERK1, MAPK1/ERK2 and AKT1 (By similarity). As part of the MAPK/ERK signaling pathway, acts as a negative regulator of apoptosis in cardiomyocytes via promotion of STUB1/CHIP-mediated ubiquitination and degradation of ICER-type isoforms of CREM (By similarity).</text>
</comment>
<comment type="subunit">
    <text evidence="2">Forms a ternary complex with IGFR1 and ITGAV:ITGB3. Forms a ternary complex with IGFR1 and ITGA6:ITGB4. Forms a ternary complex with IGFBP3 and ALS.</text>
</comment>
<comment type="subcellular location">
    <subcellularLocation>
        <location evidence="1">Secreted</location>
    </subcellularLocation>
</comment>
<comment type="alternative products">
    <event type="alternative splicing"/>
    <isoform>
        <id>P10763-1</id>
        <name>B</name>
        <sequence type="displayed"/>
    </isoform>
    <isoform>
        <id>P10763-2</id>
        <name>A</name>
        <sequence type="described" ref="VSP_002707"/>
    </isoform>
    <isoform>
        <id>P10763-3</id>
        <name>C</name>
        <sequence type="described" ref="VSP_002706"/>
    </isoform>
</comment>
<comment type="similarity">
    <text evidence="6">Belongs to the insulin family.</text>
</comment>
<accession>P10763</accession>
<name>IGF1_SHEEP</name>
<proteinExistence type="evidence at protein level"/>
<gene>
    <name evidence="2" type="primary">IGF1</name>
    <name evidence="2" type="synonym">IGF-1</name>
</gene>
<dbReference type="EMBL" id="M30653">
    <property type="protein sequence ID" value="AAA80532.1"/>
    <property type="molecule type" value="mRNA"/>
</dbReference>
<dbReference type="EMBL" id="M30653">
    <property type="protein sequence ID" value="AAA80533.1"/>
    <property type="molecule type" value="mRNA"/>
</dbReference>
<dbReference type="EMBL" id="M31734">
    <property type="protein sequence ID" value="AAA80535.1"/>
    <property type="molecule type" value="mRNA"/>
</dbReference>
<dbReference type="EMBL" id="M31734">
    <property type="protein sequence ID" value="AAA80534.1"/>
    <property type="molecule type" value="mRNA"/>
</dbReference>
<dbReference type="EMBL" id="M31736">
    <property type="protein sequence ID" value="AAA31545.1"/>
    <property type="molecule type" value="mRNA"/>
</dbReference>
<dbReference type="EMBL" id="M31735">
    <property type="protein sequence ID" value="AAA31546.1"/>
    <property type="molecule type" value="mRNA"/>
</dbReference>
<dbReference type="EMBL" id="M31735">
    <property type="protein sequence ID" value="AAA31547.1"/>
    <property type="molecule type" value="mRNA"/>
</dbReference>
<dbReference type="EMBL" id="X69472">
    <property type="protein sequence ID" value="CAA49230.1"/>
    <property type="molecule type" value="Genomic_DNA"/>
</dbReference>
<dbReference type="EMBL" id="X69473">
    <property type="protein sequence ID" value="CAA49230.1"/>
    <property type="status" value="JOINED"/>
    <property type="molecule type" value="Genomic_DNA"/>
</dbReference>
<dbReference type="EMBL" id="X69474">
    <property type="protein sequence ID" value="CAA49230.1"/>
    <property type="status" value="JOINED"/>
    <property type="molecule type" value="Genomic_DNA"/>
</dbReference>
<dbReference type="EMBL" id="X69475">
    <property type="protein sequence ID" value="CAA49230.1"/>
    <property type="status" value="JOINED"/>
    <property type="molecule type" value="Genomic_DNA"/>
</dbReference>
<dbReference type="EMBL" id="X69472">
    <property type="protein sequence ID" value="CAA49231.1"/>
    <property type="molecule type" value="Genomic_DNA"/>
</dbReference>
<dbReference type="EMBL" id="X69473">
    <property type="protein sequence ID" value="CAA49231.1"/>
    <property type="status" value="JOINED"/>
    <property type="molecule type" value="Genomic_DNA"/>
</dbReference>
<dbReference type="EMBL" id="X69474">
    <property type="protein sequence ID" value="CAA49231.1"/>
    <property type="status" value="JOINED"/>
    <property type="molecule type" value="Genomic_DNA"/>
</dbReference>
<dbReference type="EMBL" id="X69475">
    <property type="protein sequence ID" value="CAA49231.1"/>
    <property type="status" value="JOINED"/>
    <property type="molecule type" value="Genomic_DNA"/>
</dbReference>
<dbReference type="EMBL" id="X69473">
    <property type="protein sequence ID" value="CAA49232.1"/>
    <property type="molecule type" value="Genomic_DNA"/>
</dbReference>
<dbReference type="EMBL" id="X69474">
    <property type="protein sequence ID" value="CAA49232.1"/>
    <property type="status" value="JOINED"/>
    <property type="molecule type" value="Genomic_DNA"/>
</dbReference>
<dbReference type="EMBL" id="X69475">
    <property type="protein sequence ID" value="CAA49232.1"/>
    <property type="status" value="JOINED"/>
    <property type="molecule type" value="Genomic_DNA"/>
</dbReference>
<dbReference type="EMBL" id="M89787">
    <property type="protein sequence ID" value="AAA31544.1"/>
    <property type="molecule type" value="mRNA"/>
</dbReference>
<dbReference type="PIR" id="S22877">
    <property type="entry name" value="A33390"/>
</dbReference>
<dbReference type="RefSeq" id="NP_001009774.1">
    <molecule id="P10763-1"/>
    <property type="nucleotide sequence ID" value="NM_001009774.3"/>
</dbReference>
<dbReference type="RefSeq" id="XP_012015041.1">
    <molecule id="P10763-3"/>
    <property type="nucleotide sequence ID" value="XM_012159651.4"/>
</dbReference>
<dbReference type="RefSeq" id="XP_060267591.1">
    <molecule id="P10763-1"/>
    <property type="nucleotide sequence ID" value="XM_060411608.1"/>
</dbReference>
<dbReference type="BMRB" id="P10763"/>
<dbReference type="SMR" id="P10763"/>
<dbReference type="STRING" id="9940.ENSOARP00000017024"/>
<dbReference type="PaxDb" id="9940-ENSOARP00000017024"/>
<dbReference type="GeneID" id="443318"/>
<dbReference type="KEGG" id="oas:443318"/>
<dbReference type="CTD" id="3479"/>
<dbReference type="eggNOG" id="ENOG502RCAB">
    <property type="taxonomic scope" value="Eukaryota"/>
</dbReference>
<dbReference type="OrthoDB" id="8936076at2759"/>
<dbReference type="Proteomes" id="UP000002356">
    <property type="component" value="Unplaced"/>
</dbReference>
<dbReference type="GO" id="GO:0035867">
    <property type="term" value="C:alphav-beta3 integrin-IGF-1-IGF1R complex"/>
    <property type="evidence" value="ECO:0000250"/>
    <property type="project" value="UniProtKB"/>
</dbReference>
<dbReference type="GO" id="GO:0070382">
    <property type="term" value="C:exocytic vesicle"/>
    <property type="evidence" value="ECO:0000250"/>
    <property type="project" value="UniProtKB"/>
</dbReference>
<dbReference type="GO" id="GO:0005615">
    <property type="term" value="C:extracellular space"/>
    <property type="evidence" value="ECO:0007669"/>
    <property type="project" value="InterPro"/>
</dbReference>
<dbReference type="GO" id="GO:0008083">
    <property type="term" value="F:growth factor activity"/>
    <property type="evidence" value="ECO:0007669"/>
    <property type="project" value="UniProtKB-KW"/>
</dbReference>
<dbReference type="GO" id="GO:0005179">
    <property type="term" value="F:hormone activity"/>
    <property type="evidence" value="ECO:0007669"/>
    <property type="project" value="InterPro"/>
</dbReference>
<dbReference type="GO" id="GO:0005159">
    <property type="term" value="F:insulin-like growth factor receptor binding"/>
    <property type="evidence" value="ECO:0000250"/>
    <property type="project" value="UniProtKB"/>
</dbReference>
<dbReference type="GO" id="GO:0008283">
    <property type="term" value="P:cell population proliferation"/>
    <property type="evidence" value="ECO:0007669"/>
    <property type="project" value="TreeGrafter"/>
</dbReference>
<dbReference type="GO" id="GO:0048009">
    <property type="term" value="P:insulin-like growth factor receptor signaling pathway"/>
    <property type="evidence" value="ECO:0000250"/>
    <property type="project" value="UniProtKB"/>
</dbReference>
<dbReference type="GO" id="GO:0043066">
    <property type="term" value="P:negative regulation of apoptotic process"/>
    <property type="evidence" value="ECO:0000250"/>
    <property type="project" value="UniProtKB"/>
</dbReference>
<dbReference type="GO" id="GO:0090201">
    <property type="term" value="P:negative regulation of release of cytochrome c from mitochondria"/>
    <property type="evidence" value="ECO:0000250"/>
    <property type="project" value="UniProtKB"/>
</dbReference>
<dbReference type="GO" id="GO:0034392">
    <property type="term" value="P:negative regulation of smooth muscle cell apoptotic process"/>
    <property type="evidence" value="ECO:0000250"/>
    <property type="project" value="UniProtKB"/>
</dbReference>
<dbReference type="GO" id="GO:0008284">
    <property type="term" value="P:positive regulation of cell population proliferation"/>
    <property type="evidence" value="ECO:0000250"/>
    <property type="project" value="UniProtKB"/>
</dbReference>
<dbReference type="GO" id="GO:0046326">
    <property type="term" value="P:positive regulation of D-glucose import"/>
    <property type="evidence" value="ECO:0000250"/>
    <property type="project" value="UniProtKB"/>
</dbReference>
<dbReference type="GO" id="GO:0045725">
    <property type="term" value="P:positive regulation of glycogen biosynthetic process"/>
    <property type="evidence" value="ECO:0000250"/>
    <property type="project" value="UniProtKB"/>
</dbReference>
<dbReference type="GO" id="GO:0043410">
    <property type="term" value="P:positive regulation of MAPK cascade"/>
    <property type="evidence" value="ECO:0000250"/>
    <property type="project" value="UniProtKB"/>
</dbReference>
<dbReference type="GO" id="GO:0051897">
    <property type="term" value="P:positive regulation of phosphatidylinositol 3-kinase/protein kinase B signal transduction"/>
    <property type="evidence" value="ECO:0007669"/>
    <property type="project" value="TreeGrafter"/>
</dbReference>
<dbReference type="CDD" id="cd04368">
    <property type="entry name" value="IlGF"/>
    <property type="match status" value="1"/>
</dbReference>
<dbReference type="FunFam" id="1.10.100.10:FF:000001">
    <property type="entry name" value="insulin-like growth factor I isoform X1"/>
    <property type="match status" value="1"/>
</dbReference>
<dbReference type="Gene3D" id="1.10.100.10">
    <property type="entry name" value="Insulin-like"/>
    <property type="match status" value="1"/>
</dbReference>
<dbReference type="InterPro" id="IPR022341">
    <property type="entry name" value="IGF-I"/>
</dbReference>
<dbReference type="InterPro" id="IPR016179">
    <property type="entry name" value="Insulin-like"/>
</dbReference>
<dbReference type="InterPro" id="IPR022350">
    <property type="entry name" value="Insulin-like_growth_factor"/>
</dbReference>
<dbReference type="InterPro" id="IPR036438">
    <property type="entry name" value="Insulin-like_sf"/>
</dbReference>
<dbReference type="InterPro" id="IPR022353">
    <property type="entry name" value="Insulin_CS"/>
</dbReference>
<dbReference type="InterPro" id="IPR022352">
    <property type="entry name" value="Insulin_family"/>
</dbReference>
<dbReference type="PANTHER" id="PTHR46845">
    <property type="entry name" value="INSULIN-LIKE GROWTH FACTOR I"/>
    <property type="match status" value="1"/>
</dbReference>
<dbReference type="PANTHER" id="PTHR46845:SF1">
    <property type="entry name" value="INSULIN-LIKE GROWTH FACTOR I"/>
    <property type="match status" value="1"/>
</dbReference>
<dbReference type="Pfam" id="PF00049">
    <property type="entry name" value="Insulin"/>
    <property type="match status" value="1"/>
</dbReference>
<dbReference type="PRINTS" id="PR02002">
    <property type="entry name" value="INSLNLIKEGF"/>
</dbReference>
<dbReference type="PRINTS" id="PR02005">
    <property type="entry name" value="INSLNLIKEGF1"/>
</dbReference>
<dbReference type="PRINTS" id="PR00276">
    <property type="entry name" value="INSULINFAMLY"/>
</dbReference>
<dbReference type="SMART" id="SM00078">
    <property type="entry name" value="IlGF"/>
    <property type="match status" value="1"/>
</dbReference>
<dbReference type="SUPFAM" id="SSF56994">
    <property type="entry name" value="Insulin-like"/>
    <property type="match status" value="1"/>
</dbReference>
<dbReference type="PROSITE" id="PS00262">
    <property type="entry name" value="INSULIN"/>
    <property type="match status" value="1"/>
</dbReference>
<sequence length="154" mass="17012">MGKISSLPTQLFKCCFCDFLKQVKMPVTSSSHLFYLALCLLAFSSSATAGPETLCGAELVDALQFVCGDRGFYFNKPTGYGSSSRRAPQTGIVDECCFRSCDLRRLEMYCAPLKAAKSARSVRAQRHTDMPKAQKEVHLKNTSRGSAGNKNYRM</sequence>
<evidence type="ECO:0000250" key="1">
    <source>
        <dbReference type="UniProtKB" id="P05017"/>
    </source>
</evidence>
<evidence type="ECO:0000250" key="2">
    <source>
        <dbReference type="UniProtKB" id="P05019"/>
    </source>
</evidence>
<evidence type="ECO:0000250" key="3">
    <source>
        <dbReference type="UniProtKB" id="P08025"/>
    </source>
</evidence>
<evidence type="ECO:0000256" key="4">
    <source>
        <dbReference type="SAM" id="MobiDB-lite"/>
    </source>
</evidence>
<evidence type="ECO:0000303" key="5">
    <source>
    </source>
</evidence>
<evidence type="ECO:0000305" key="6"/>
<feature type="signal peptide">
    <location>
        <begin position="1"/>
        <end status="unknown"/>
    </location>
</feature>
<feature type="propeptide" id="PRO_0000015684">
    <location>
        <begin status="unknown"/>
        <end position="49"/>
    </location>
</feature>
<feature type="chain" id="PRO_0000015685" description="Insulin-like growth factor 1">
    <location>
        <begin position="50"/>
        <end position="119"/>
    </location>
</feature>
<feature type="propeptide" id="PRO_0000015686" description="E peptide">
    <location>
        <begin position="120"/>
        <end position="154"/>
    </location>
</feature>
<feature type="region of interest" description="B">
    <location>
        <begin position="50"/>
        <end position="78"/>
    </location>
</feature>
<feature type="region of interest" description="C">
    <location>
        <begin position="79"/>
        <end position="90"/>
    </location>
</feature>
<feature type="region of interest" description="A">
    <location>
        <begin position="91"/>
        <end position="111"/>
    </location>
</feature>
<feature type="region of interest" description="D">
    <location>
        <begin position="112"/>
        <end position="119"/>
    </location>
</feature>
<feature type="region of interest" description="Disordered" evidence="4">
    <location>
        <begin position="121"/>
        <end position="154"/>
    </location>
</feature>
<feature type="compositionally biased region" description="Basic and acidic residues" evidence="4">
    <location>
        <begin position="126"/>
        <end position="139"/>
    </location>
</feature>
<feature type="compositionally biased region" description="Polar residues" evidence="4">
    <location>
        <begin position="140"/>
        <end position="154"/>
    </location>
</feature>
<feature type="disulfide bond" evidence="2">
    <location>
        <begin position="55"/>
        <end position="97"/>
    </location>
</feature>
<feature type="disulfide bond" evidence="2">
    <location>
        <begin position="67"/>
        <end position="110"/>
    </location>
</feature>
<feature type="disulfide bond" evidence="2">
    <location>
        <begin position="96"/>
        <end position="101"/>
    </location>
</feature>
<feature type="splice variant" id="VSP_002707" description="In isoform A." evidence="6">
    <location>
        <begin position="1"/>
        <end position="24"/>
    </location>
</feature>
<feature type="splice variant" id="VSP_002706" description="In isoform C." evidence="6">
    <original>MGKISSLPTQLFKCCFCDFLK</original>
    <variation>MVTPT</variation>
    <location>
        <begin position="1"/>
        <end position="21"/>
    </location>
</feature>
<feature type="sequence conflict" description="In Ref. 4; AAA31544." evidence="6" ref="4">
    <original>A</original>
    <variation>V</variation>
    <location>
        <position position="57"/>
    </location>
</feature>
<keyword id="KW-0025">Alternative splicing</keyword>
<keyword id="KW-0903">Direct protein sequencing</keyword>
<keyword id="KW-1015">Disulfide bond</keyword>
<keyword id="KW-0339">Growth factor</keyword>
<keyword id="KW-1185">Reference proteome</keyword>
<keyword id="KW-0964">Secreted</keyword>
<keyword id="KW-0732">Signal</keyword>
<reference key="1">
    <citation type="journal article" date="1989" name="DNA">
        <title>Cloning of ovine insulin-like growth factor-I cDNAs: heterogeneity in the mRNA population.</title>
        <authorList>
            <person name="Wong E.A."/>
            <person name="Ohlsen S.M."/>
            <person name="Godfredson J.A."/>
            <person name="Dean D.M."/>
            <person name="Wheaton J.E."/>
        </authorList>
    </citation>
    <scope>NUCLEOTIDE SEQUENCE [MRNA]</scope>
    <source>
        <tissue>Liver</tissue>
    </source>
</reference>
<reference key="2">
    <citation type="journal article" date="1991" name="J. Mol. Endocrinol.">
        <title>The ovine insulin-like growth factor-I gene: characterization, expression and identification of a putative promoter.</title>
        <authorList>
            <person name="Dickson M.C."/>
            <person name="Saunders J.C."/>
            <person name="Gilmour R.S."/>
        </authorList>
    </citation>
    <scope>NUCLEOTIDE SEQUENCE</scope>
    <source>
        <tissue>Liver</tissue>
    </source>
</reference>
<reference key="3">
    <citation type="journal article" date="1993" name="DNA Cell Biol.">
        <title>Characterization of multiple transcription initiation sites of the ovine insulin-like growth factor-I gene and expression profiles of three alternatively spliced transcripts.</title>
        <authorList>
            <person name="Ohlsen S.M."/>
            <person name="Dean D.M."/>
            <person name="Wong E.A."/>
        </authorList>
    </citation>
    <scope>NUCLEOTIDE SEQUENCE [GENOMIC DNA]</scope>
    <source>
        <tissue>Liver</tissue>
    </source>
</reference>
<reference key="4">
    <citation type="journal article" date="1993" name="Biochim. Biophys. Acta">
        <title>Characterization of two sheep insulin-like growth factor II cDNAs with different 5'-untranslated regions.</title>
        <authorList>
            <person name="Demmer J."/>
            <person name="Hill D.F."/>
            <person name="Petersen G.B."/>
        </authorList>
    </citation>
    <scope>NUCLEOTIDE SEQUENCE [MRNA] OF 55-135</scope>
    <source>
        <strain>Coopworth</strain>
        <tissue>Liver</tissue>
    </source>
</reference>
<reference key="5">
    <citation type="journal article" date="1989" name="Endocrinology">
        <title>Sheep insulin-like growth factors I and II: sequences, activities and assays.</title>
        <authorList>
            <person name="Francis G.L."/>
            <person name="McNeil K.A."/>
            <person name="Wallace J.C."/>
            <person name="Ballard F.J."/>
            <person name="Owens P.C."/>
        </authorList>
    </citation>
    <scope>PROTEIN SEQUENCE OF 50-119</scope>
</reference>
<reference key="6">
    <citation type="journal article" date="1989" name="Biochim. Biophys. Acta">
        <title>Simultaneous isolation of insulin-like growth factors I and II from adult sheep serum.</title>
        <authorList>
            <person name="Hey A.W."/>
            <person name="Browne C.A."/>
            <person name="Simpson R.J."/>
            <person name="Thorburn G.D."/>
        </authorList>
    </citation>
    <scope>PROTEIN SEQUENCE OF 50-79</scope>
</reference>